<dbReference type="EC" id="3.4.19.12" evidence="2"/>
<dbReference type="RefSeq" id="NP_001300791.1">
    <property type="nucleotide sequence ID" value="NM_001313862.2"/>
</dbReference>
<dbReference type="RefSeq" id="XP_013966369.1">
    <property type="nucleotide sequence ID" value="XM_014110894.1"/>
</dbReference>
<dbReference type="RefSeq" id="XP_013966370.1">
    <property type="nucleotide sequence ID" value="XM_014110895.1"/>
</dbReference>
<dbReference type="RefSeq" id="XP_013966371.1">
    <property type="nucleotide sequence ID" value="XM_014110896.1"/>
</dbReference>
<dbReference type="RefSeq" id="XP_038303245.1">
    <property type="nucleotide sequence ID" value="XM_038447317.1"/>
</dbReference>
<dbReference type="RefSeq" id="XP_038303246.1">
    <property type="nucleotide sequence ID" value="XM_038447318.1"/>
</dbReference>
<dbReference type="RefSeq" id="XP_545643.2">
    <property type="nucleotide sequence ID" value="XM_545643.5"/>
</dbReference>
<dbReference type="SMR" id="E2RK09"/>
<dbReference type="FunCoup" id="E2RK09">
    <property type="interactions" value="787"/>
</dbReference>
<dbReference type="STRING" id="9615.ENSCAFP00000021817"/>
<dbReference type="MEROPS" id="C19.053"/>
<dbReference type="PaxDb" id="9612-ENSCAFP00000021805"/>
<dbReference type="Ensembl" id="ENSCAFT00000023494.6">
    <property type="protein sequence ID" value="ENSCAFP00000021817.3"/>
    <property type="gene ID" value="ENSCAFG00000014781.6"/>
</dbReference>
<dbReference type="Ensembl" id="ENSCAFT00030042622.1">
    <property type="protein sequence ID" value="ENSCAFP00030037185.1"/>
    <property type="gene ID" value="ENSCAFG00030023150.1"/>
</dbReference>
<dbReference type="Ensembl" id="ENSCAFT00040043401.1">
    <property type="protein sequence ID" value="ENSCAFP00040037861.1"/>
    <property type="gene ID" value="ENSCAFG00040023347.1"/>
</dbReference>
<dbReference type="Ensembl" id="ENSCAFT00845048558.1">
    <property type="protein sequence ID" value="ENSCAFP00845038091.1"/>
    <property type="gene ID" value="ENSCAFG00845027522.1"/>
</dbReference>
<dbReference type="GeneID" id="488523"/>
<dbReference type="KEGG" id="cfa:488523"/>
<dbReference type="CTD" id="57695"/>
<dbReference type="VEuPathDB" id="HostDB:ENSCAFG00845027522"/>
<dbReference type="VGNC" id="VGNC:48192">
    <property type="gene designation" value="USP37"/>
</dbReference>
<dbReference type="eggNOG" id="KOG1868">
    <property type="taxonomic scope" value="Eukaryota"/>
</dbReference>
<dbReference type="GeneTree" id="ENSGT00940000158091"/>
<dbReference type="HOGENOM" id="CLU_012557_0_0_1"/>
<dbReference type="InParanoid" id="E2RK09"/>
<dbReference type="OMA" id="CGEVVNK"/>
<dbReference type="OrthoDB" id="289038at2759"/>
<dbReference type="Reactome" id="R-CFA-5689880">
    <property type="pathway name" value="Ub-specific processing proteases"/>
</dbReference>
<dbReference type="Proteomes" id="UP000002254">
    <property type="component" value="Chromosome 37"/>
</dbReference>
<dbReference type="Proteomes" id="UP000694429">
    <property type="component" value="Chromosome 37"/>
</dbReference>
<dbReference type="Proteomes" id="UP000694542">
    <property type="component" value="Chromosome 37"/>
</dbReference>
<dbReference type="Proteomes" id="UP000805418">
    <property type="component" value="Chromosome 37"/>
</dbReference>
<dbReference type="Bgee" id="ENSCAFG00000014781">
    <property type="expression patterns" value="Expressed in jejunum and 49 other cell types or tissues"/>
</dbReference>
<dbReference type="GO" id="GO:0005694">
    <property type="term" value="C:chromosome"/>
    <property type="evidence" value="ECO:0007669"/>
    <property type="project" value="UniProtKB-SubCell"/>
</dbReference>
<dbReference type="GO" id="GO:0005829">
    <property type="term" value="C:cytosol"/>
    <property type="evidence" value="ECO:0000318"/>
    <property type="project" value="GO_Central"/>
</dbReference>
<dbReference type="GO" id="GO:0005634">
    <property type="term" value="C:nucleus"/>
    <property type="evidence" value="ECO:0000318"/>
    <property type="project" value="GO_Central"/>
</dbReference>
<dbReference type="GO" id="GO:0004843">
    <property type="term" value="F:cysteine-type deubiquitinase activity"/>
    <property type="evidence" value="ECO:0000250"/>
    <property type="project" value="UniProtKB"/>
</dbReference>
<dbReference type="GO" id="GO:0004197">
    <property type="term" value="F:cysteine-type endopeptidase activity"/>
    <property type="evidence" value="ECO:0000250"/>
    <property type="project" value="UniProtKB"/>
</dbReference>
<dbReference type="GO" id="GO:0019901">
    <property type="term" value="F:protein kinase binding"/>
    <property type="evidence" value="ECO:0007669"/>
    <property type="project" value="Ensembl"/>
</dbReference>
<dbReference type="GO" id="GO:0051301">
    <property type="term" value="P:cell division"/>
    <property type="evidence" value="ECO:0007669"/>
    <property type="project" value="UniProtKB-KW"/>
</dbReference>
<dbReference type="GO" id="GO:0000082">
    <property type="term" value="P:G1/S transition of mitotic cell cycle"/>
    <property type="evidence" value="ECO:0000250"/>
    <property type="project" value="UniProtKB"/>
</dbReference>
<dbReference type="GO" id="GO:0016579">
    <property type="term" value="P:protein deubiquitination"/>
    <property type="evidence" value="ECO:0000250"/>
    <property type="project" value="UniProtKB"/>
</dbReference>
<dbReference type="GO" id="GO:0035871">
    <property type="term" value="P:protein K11-linked deubiquitination"/>
    <property type="evidence" value="ECO:0000250"/>
    <property type="project" value="UniProtKB"/>
</dbReference>
<dbReference type="GO" id="GO:0071108">
    <property type="term" value="P:protein K48-linked deubiquitination"/>
    <property type="evidence" value="ECO:0000250"/>
    <property type="project" value="UniProtKB"/>
</dbReference>
<dbReference type="GO" id="GO:0006508">
    <property type="term" value="P:proteolysis"/>
    <property type="evidence" value="ECO:0007669"/>
    <property type="project" value="UniProtKB-KW"/>
</dbReference>
<dbReference type="GO" id="GO:0006275">
    <property type="term" value="P:regulation of DNA replication"/>
    <property type="evidence" value="ECO:0000250"/>
    <property type="project" value="UniProtKB"/>
</dbReference>
<dbReference type="GO" id="GO:0031647">
    <property type="term" value="P:regulation of protein stability"/>
    <property type="evidence" value="ECO:0000318"/>
    <property type="project" value="GO_Central"/>
</dbReference>
<dbReference type="CDD" id="cd02257">
    <property type="entry name" value="Peptidase_C19"/>
    <property type="match status" value="2"/>
</dbReference>
<dbReference type="CDD" id="cd13312">
    <property type="entry name" value="PH_USP37_like"/>
    <property type="match status" value="1"/>
</dbReference>
<dbReference type="FunFam" id="2.30.29.180:FF:000001">
    <property type="entry name" value="Ubiquitin carboxyl-terminal hydrolase 37"/>
    <property type="match status" value="1"/>
</dbReference>
<dbReference type="FunFam" id="3.90.70.10:FF:000040">
    <property type="entry name" value="Ubiquitin carboxyl-terminal hydrolase 37"/>
    <property type="match status" value="1"/>
</dbReference>
<dbReference type="FunFam" id="3.90.70.10:FF:000287">
    <property type="entry name" value="Ubiquitin specific peptidase 37"/>
    <property type="match status" value="1"/>
</dbReference>
<dbReference type="Gene3D" id="3.90.70.10">
    <property type="entry name" value="Cysteine proteinases"/>
    <property type="match status" value="2"/>
</dbReference>
<dbReference type="Gene3D" id="2.30.29.180">
    <property type="entry name" value="Ubiquitin carboxyl-terminal hydrolase 26/29/37, pleckstrin homology-like domain"/>
    <property type="match status" value="1"/>
</dbReference>
<dbReference type="InterPro" id="IPR038765">
    <property type="entry name" value="Papain-like_cys_pep_sf"/>
</dbReference>
<dbReference type="InterPro" id="IPR050164">
    <property type="entry name" value="Peptidase_C19"/>
</dbReference>
<dbReference type="InterPro" id="IPR001394">
    <property type="entry name" value="Peptidase_C19_UCH"/>
</dbReference>
<dbReference type="InterPro" id="IPR003903">
    <property type="entry name" value="UIM_dom"/>
</dbReference>
<dbReference type="InterPro" id="IPR032069">
    <property type="entry name" value="USP37-like_PH"/>
</dbReference>
<dbReference type="InterPro" id="IPR038093">
    <property type="entry name" value="USP37-like_PH_sf"/>
</dbReference>
<dbReference type="InterPro" id="IPR018200">
    <property type="entry name" value="USP_CS"/>
</dbReference>
<dbReference type="InterPro" id="IPR028889">
    <property type="entry name" value="USP_dom"/>
</dbReference>
<dbReference type="PANTHER" id="PTHR24006">
    <property type="entry name" value="UBIQUITIN CARBOXYL-TERMINAL HYDROLASE"/>
    <property type="match status" value="1"/>
</dbReference>
<dbReference type="PANTHER" id="PTHR24006:SF686">
    <property type="entry name" value="UBIQUITIN CARBOXYL-TERMINAL HYDROLASE 37"/>
    <property type="match status" value="1"/>
</dbReference>
<dbReference type="Pfam" id="PF00443">
    <property type="entry name" value="UCH"/>
    <property type="match status" value="1"/>
</dbReference>
<dbReference type="Pfam" id="PF16674">
    <property type="entry name" value="UCH_N"/>
    <property type="match status" value="1"/>
</dbReference>
<dbReference type="Pfam" id="PF02809">
    <property type="entry name" value="UIM"/>
    <property type="match status" value="3"/>
</dbReference>
<dbReference type="SMART" id="SM00726">
    <property type="entry name" value="UIM"/>
    <property type="match status" value="4"/>
</dbReference>
<dbReference type="SUPFAM" id="SSF54001">
    <property type="entry name" value="Cysteine proteinases"/>
    <property type="match status" value="1"/>
</dbReference>
<dbReference type="PROSITE" id="PS50330">
    <property type="entry name" value="UIM"/>
    <property type="match status" value="3"/>
</dbReference>
<dbReference type="PROSITE" id="PS00972">
    <property type="entry name" value="USP_1"/>
    <property type="match status" value="1"/>
</dbReference>
<dbReference type="PROSITE" id="PS00973">
    <property type="entry name" value="USP_2"/>
    <property type="match status" value="1"/>
</dbReference>
<dbReference type="PROSITE" id="PS50235">
    <property type="entry name" value="USP_3"/>
    <property type="match status" value="1"/>
</dbReference>
<keyword id="KW-0131">Cell cycle</keyword>
<keyword id="KW-0132">Cell division</keyword>
<keyword id="KW-0158">Chromosome</keyword>
<keyword id="KW-0378">Hydrolase</keyword>
<keyword id="KW-0498">Mitosis</keyword>
<keyword id="KW-0539">Nucleus</keyword>
<keyword id="KW-0597">Phosphoprotein</keyword>
<keyword id="KW-0645">Protease</keyword>
<keyword id="KW-1185">Reference proteome</keyword>
<keyword id="KW-0677">Repeat</keyword>
<keyword id="KW-0788">Thiol protease</keyword>
<keyword id="KW-0832">Ubl conjugation</keyword>
<keyword id="KW-0833">Ubl conjugation pathway</keyword>
<organism>
    <name type="scientific">Canis lupus familiaris</name>
    <name type="common">Dog</name>
    <name type="synonym">Canis familiaris</name>
    <dbReference type="NCBI Taxonomy" id="9615"/>
    <lineage>
        <taxon>Eukaryota</taxon>
        <taxon>Metazoa</taxon>
        <taxon>Chordata</taxon>
        <taxon>Craniata</taxon>
        <taxon>Vertebrata</taxon>
        <taxon>Euteleostomi</taxon>
        <taxon>Mammalia</taxon>
        <taxon>Eutheria</taxon>
        <taxon>Laurasiatheria</taxon>
        <taxon>Carnivora</taxon>
        <taxon>Caniformia</taxon>
        <taxon>Canidae</taxon>
        <taxon>Canis</taxon>
    </lineage>
</organism>
<evidence type="ECO:0000250" key="1"/>
<evidence type="ECO:0000250" key="2">
    <source>
        <dbReference type="UniProtKB" id="Q86T82"/>
    </source>
</evidence>
<evidence type="ECO:0000255" key="3">
    <source>
        <dbReference type="PROSITE-ProRule" id="PRU00213"/>
    </source>
</evidence>
<evidence type="ECO:0000255" key="4">
    <source>
        <dbReference type="PROSITE-ProRule" id="PRU10092"/>
    </source>
</evidence>
<evidence type="ECO:0000255" key="5">
    <source>
        <dbReference type="PROSITE-ProRule" id="PRU10093"/>
    </source>
</evidence>
<evidence type="ECO:0000256" key="6">
    <source>
        <dbReference type="SAM" id="MobiDB-lite"/>
    </source>
</evidence>
<evidence type="ECO:0000305" key="7"/>
<protein>
    <recommendedName>
        <fullName>Ubiquitin carboxyl-terminal hydrolase 37</fullName>
        <ecNumber evidence="2">3.4.19.12</ecNumber>
    </recommendedName>
    <alternativeName>
        <fullName>Deubiquitinating enzyme 37</fullName>
    </alternativeName>
    <alternativeName>
        <fullName>Ubiquitin thioesterase 37</fullName>
    </alternativeName>
    <alternativeName>
        <fullName>Ubiquitin-specific-processing protease 37</fullName>
    </alternativeName>
</protein>
<proteinExistence type="inferred from homology"/>
<accession>E2RK09</accession>
<accession>F1PGV7</accession>
<gene>
    <name type="primary">USP37</name>
</gene>
<comment type="function">
    <text evidence="2">Deubiquitinase that plays a role in different processes including cell cycle regulation, DNA replication or DNA damage response. Antagonizes the anaphase-promoting complex (APC/C) during G1/S transition by mediating deubiquitination of cyclin-A (CCNA1 and CCNA2), thereby promoting S phase entry. Specifically mediates deubiquitination of 'Lys-11'-linked polyubiquitin chains, a specific ubiquitin-linkage type mediated by the APC/C complex. Phosphorylation at Ser-628 during G1/S phase maximizes the deubiquitinase activity, leading to prevent degradation of cyclin-A (CCNA1 and CCNA2). Plays an important role in the regulation of DNA replication by stabilizing the licensing factor CDT1. Also plays an essential role beyond S-phase entry to promote the efficiency and fidelity of replication by deubiquitinating checkpoint kinase 1/CHK1, promoting its stability. Sustains the DNA damage response (DDR) by deubiquitinating and stabilizing the ATP-dependent DNA helicase BLM. Mechanistically, DNA double-strand breaks (DSB) promotes ATM-mediated phosphorylation of USP37 and enhances the binding between USP37 and BLM. Promotes cell migration by deubiquitinating and stabilizing the epithelial-mesenchymal transition (EMT)-inducing transcription factor SNAI. Plays a role in the regulation of mitotic spindle assembly and mitotic progression by associating with chromatin-associated WAPL and stabilizing it through deubiquitination.</text>
</comment>
<comment type="catalytic activity">
    <reaction evidence="2">
        <text>Thiol-dependent hydrolysis of ester, thioester, amide, peptide and isopeptide bonds formed by the C-terminal Gly of ubiquitin (a 76-residue protein attached to proteins as an intracellular targeting signal).</text>
        <dbReference type="EC" id="3.4.19.12"/>
    </reaction>
</comment>
<comment type="subunit">
    <text evidence="2">Interacts with FZR1/CDH1. Interacts with CDT1.</text>
</comment>
<comment type="subcellular location">
    <subcellularLocation>
        <location evidence="2">Nucleus</location>
    </subcellularLocation>
    <subcellularLocation>
        <location evidence="2">Chromosome</location>
    </subcellularLocation>
</comment>
<comment type="domain">
    <text evidence="2">The KEN box 3 is required for interaction with FZR1/CDH1 and is essential for APC(CDH1)-mediated ubiquitination.</text>
</comment>
<comment type="PTM">
    <text evidence="2">Polyubiquitinated via 'Lys-11'-linked ubiquitin by the APC(CDH1) complex during late mitosis, leading to its degradation. Able to mediate auto-deubiquitination.</text>
</comment>
<comment type="PTM">
    <text evidence="2">Phosphorylated at Ser-630 by CDK2 during G1/S phase but not during mitosis; phosphorylation at Ser-630 is required for deubiquitinase activity. Also polyubiquitinated during early G1 phase, without leading to degradation. Phosphorylated at Ser-114 by ATM following DNA damage, which in turn increases its deubiquitination activity towards BLM.</text>
</comment>
<comment type="similarity">
    <text evidence="7">Belongs to the peptidase C19 family.</text>
</comment>
<sequence>MSPLKIHGPIRIRSMQTGITKWKEGSFEIVEKENKVSLVVHYNTGGIPRIFQLSHNIKNVVLRPSGAKQSRLMLTLQDNSFLSIDKVPSKDAEEMRLFLDAVHQNRLHAAMKPSQGSGSFGAILGSRTSQKETNRQLSYSDNQASSKRGSLETKDDIPFRKVLGNPGRGSIKTATGSGITVTRTIPSLTSASTPLRSGLLENRTEKRKRMLSSGSELNEDYPKENDSSSNNKAMTDPSRKYLTSSREKQLSLKQSEENRTSGLLPLQSSSFYGSRTGSKDYSSGSTNLDRTNVSGQTPSAKRSLGFLPQPAPLSVKKLRCNQDYTGWNKPRVPLSSHQQQQLQGFSNLGNTCYMNAILQSLFSLQSFANDLLKQGIPWKKIPLNALIRRFAHLLVKKDICNSETKKDLLKKVKNAISATAERFSGYMQNDAHEFLSQCLDQLKEDMEKLNKTWKTEPVPGEENSPDISATRVYTCPVITNLEFEVQHSIICKACGEIIPKREQFNDLSIDLPRRKKPLPPRSIQDSLDLFFRAEELEYSCEKCGGKCALVRHKFNRLPRILILHLKRYSFNVTLSLNNKIGQQVIIPRYLTLSSHCTENTKPPFTLGWSAHMAISRPLKASQMVNSCITSPSTPSKNFTFKSKSSLALCLDSDSEDELKRSVALSQRLCEMSGCEQQQDDLEKDSKPCRIEPDKSELENSGFDGMSEEELLAAVLEMSKREASPTLSHEDDDKPTSSPDTGFAEDDIQEMPENQDPVETEKPKTVTEPDPASFTEITKDCDENKENKTPEGSQGEVDWLQQYDMEREREEQELQQALAQSLQEQEAWEQKEDDDLKRATELSLQEFNNSFLDSLGSDEDSGNEDVLDMEYTEAEAEELKRNAETGNLPHSYRLISVVSHIGSTSSSGHYISDVYDIKKQAWFTYNDLEVSKIQEASVQSDRDRSGYIFFYMHKEIFDELLETEKNSQALSMEVGKTTRQAL</sequence>
<name>UBP37_CANLF</name>
<reference key="1">
    <citation type="journal article" date="2005" name="Nature">
        <title>Genome sequence, comparative analysis and haplotype structure of the domestic dog.</title>
        <authorList>
            <person name="Lindblad-Toh K."/>
            <person name="Wade C.M."/>
            <person name="Mikkelsen T.S."/>
            <person name="Karlsson E.K."/>
            <person name="Jaffe D.B."/>
            <person name="Kamal M."/>
            <person name="Clamp M."/>
            <person name="Chang J.L."/>
            <person name="Kulbokas E.J. III"/>
            <person name="Zody M.C."/>
            <person name="Mauceli E."/>
            <person name="Xie X."/>
            <person name="Breen M."/>
            <person name="Wayne R.K."/>
            <person name="Ostrander E.A."/>
            <person name="Ponting C.P."/>
            <person name="Galibert F."/>
            <person name="Smith D.R."/>
            <person name="deJong P.J."/>
            <person name="Kirkness E.F."/>
            <person name="Alvarez P."/>
            <person name="Biagi T."/>
            <person name="Brockman W."/>
            <person name="Butler J."/>
            <person name="Chin C.-W."/>
            <person name="Cook A."/>
            <person name="Cuff J."/>
            <person name="Daly M.J."/>
            <person name="DeCaprio D."/>
            <person name="Gnerre S."/>
            <person name="Grabherr M."/>
            <person name="Kellis M."/>
            <person name="Kleber M."/>
            <person name="Bardeleben C."/>
            <person name="Goodstadt L."/>
            <person name="Heger A."/>
            <person name="Hitte C."/>
            <person name="Kim L."/>
            <person name="Koepfli K.-P."/>
            <person name="Parker H.G."/>
            <person name="Pollinger J.P."/>
            <person name="Searle S.M.J."/>
            <person name="Sutter N.B."/>
            <person name="Thomas R."/>
            <person name="Webber C."/>
            <person name="Baldwin J."/>
            <person name="Abebe A."/>
            <person name="Abouelleil A."/>
            <person name="Aftuck L."/>
            <person name="Ait-Zahra M."/>
            <person name="Aldredge T."/>
            <person name="Allen N."/>
            <person name="An P."/>
            <person name="Anderson S."/>
            <person name="Antoine C."/>
            <person name="Arachchi H."/>
            <person name="Aslam A."/>
            <person name="Ayotte L."/>
            <person name="Bachantsang P."/>
            <person name="Barry A."/>
            <person name="Bayul T."/>
            <person name="Benamara M."/>
            <person name="Berlin A."/>
            <person name="Bessette D."/>
            <person name="Blitshteyn B."/>
            <person name="Bloom T."/>
            <person name="Blye J."/>
            <person name="Boguslavskiy L."/>
            <person name="Bonnet C."/>
            <person name="Boukhgalter B."/>
            <person name="Brown A."/>
            <person name="Cahill P."/>
            <person name="Calixte N."/>
            <person name="Camarata J."/>
            <person name="Cheshatsang Y."/>
            <person name="Chu J."/>
            <person name="Citroen M."/>
            <person name="Collymore A."/>
            <person name="Cooke P."/>
            <person name="Dawoe T."/>
            <person name="Daza R."/>
            <person name="Decktor K."/>
            <person name="DeGray S."/>
            <person name="Dhargay N."/>
            <person name="Dooley K."/>
            <person name="Dooley K."/>
            <person name="Dorje P."/>
            <person name="Dorjee K."/>
            <person name="Dorris L."/>
            <person name="Duffey N."/>
            <person name="Dupes A."/>
            <person name="Egbiremolen O."/>
            <person name="Elong R."/>
            <person name="Falk J."/>
            <person name="Farina A."/>
            <person name="Faro S."/>
            <person name="Ferguson D."/>
            <person name="Ferreira P."/>
            <person name="Fisher S."/>
            <person name="FitzGerald M."/>
            <person name="Foley K."/>
            <person name="Foley C."/>
            <person name="Franke A."/>
            <person name="Friedrich D."/>
            <person name="Gage D."/>
            <person name="Garber M."/>
            <person name="Gearin G."/>
            <person name="Giannoukos G."/>
            <person name="Goode T."/>
            <person name="Goyette A."/>
            <person name="Graham J."/>
            <person name="Grandbois E."/>
            <person name="Gyaltsen K."/>
            <person name="Hafez N."/>
            <person name="Hagopian D."/>
            <person name="Hagos B."/>
            <person name="Hall J."/>
            <person name="Healy C."/>
            <person name="Hegarty R."/>
            <person name="Honan T."/>
            <person name="Horn A."/>
            <person name="Houde N."/>
            <person name="Hughes L."/>
            <person name="Hunnicutt L."/>
            <person name="Husby M."/>
            <person name="Jester B."/>
            <person name="Jones C."/>
            <person name="Kamat A."/>
            <person name="Kanga B."/>
            <person name="Kells C."/>
            <person name="Khazanovich D."/>
            <person name="Kieu A.C."/>
            <person name="Kisner P."/>
            <person name="Kumar M."/>
            <person name="Lance K."/>
            <person name="Landers T."/>
            <person name="Lara M."/>
            <person name="Lee W."/>
            <person name="Leger J.-P."/>
            <person name="Lennon N."/>
            <person name="Leuper L."/>
            <person name="LeVine S."/>
            <person name="Liu J."/>
            <person name="Liu X."/>
            <person name="Lokyitsang Y."/>
            <person name="Lokyitsang T."/>
            <person name="Lui A."/>
            <person name="Macdonald J."/>
            <person name="Major J."/>
            <person name="Marabella R."/>
            <person name="Maru K."/>
            <person name="Matthews C."/>
            <person name="McDonough S."/>
            <person name="Mehta T."/>
            <person name="Meldrim J."/>
            <person name="Melnikov A."/>
            <person name="Meneus L."/>
            <person name="Mihalev A."/>
            <person name="Mihova T."/>
            <person name="Miller K."/>
            <person name="Mittelman R."/>
            <person name="Mlenga V."/>
            <person name="Mulrain L."/>
            <person name="Munson G."/>
            <person name="Navidi A."/>
            <person name="Naylor J."/>
            <person name="Nguyen T."/>
            <person name="Nguyen N."/>
            <person name="Nguyen C."/>
            <person name="Nguyen T."/>
            <person name="Nicol R."/>
            <person name="Norbu N."/>
            <person name="Norbu C."/>
            <person name="Novod N."/>
            <person name="Nyima T."/>
            <person name="Olandt P."/>
            <person name="O'Neill B."/>
            <person name="O'Neill K."/>
            <person name="Osman S."/>
            <person name="Oyono L."/>
            <person name="Patti C."/>
            <person name="Perrin D."/>
            <person name="Phunkhang P."/>
            <person name="Pierre F."/>
            <person name="Priest M."/>
            <person name="Rachupka A."/>
            <person name="Raghuraman S."/>
            <person name="Rameau R."/>
            <person name="Ray V."/>
            <person name="Raymond C."/>
            <person name="Rege F."/>
            <person name="Rise C."/>
            <person name="Rogers J."/>
            <person name="Rogov P."/>
            <person name="Sahalie J."/>
            <person name="Settipalli S."/>
            <person name="Sharpe T."/>
            <person name="Shea T."/>
            <person name="Sheehan M."/>
            <person name="Sherpa N."/>
            <person name="Shi J."/>
            <person name="Shih D."/>
            <person name="Sloan J."/>
            <person name="Smith C."/>
            <person name="Sparrow T."/>
            <person name="Stalker J."/>
            <person name="Stange-Thomann N."/>
            <person name="Stavropoulos S."/>
            <person name="Stone C."/>
            <person name="Stone S."/>
            <person name="Sykes S."/>
            <person name="Tchuinga P."/>
            <person name="Tenzing P."/>
            <person name="Tesfaye S."/>
            <person name="Thoulutsang D."/>
            <person name="Thoulutsang Y."/>
            <person name="Topham K."/>
            <person name="Topping I."/>
            <person name="Tsamla T."/>
            <person name="Vassiliev H."/>
            <person name="Venkataraman V."/>
            <person name="Vo A."/>
            <person name="Wangchuk T."/>
            <person name="Wangdi T."/>
            <person name="Weiand M."/>
            <person name="Wilkinson J."/>
            <person name="Wilson A."/>
            <person name="Yadav S."/>
            <person name="Yang S."/>
            <person name="Yang X."/>
            <person name="Young G."/>
            <person name="Yu Q."/>
            <person name="Zainoun J."/>
            <person name="Zembek L."/>
            <person name="Zimmer A."/>
            <person name="Lander E.S."/>
        </authorList>
    </citation>
    <scope>NUCLEOTIDE SEQUENCE [LARGE SCALE GENOMIC DNA]</scope>
    <source>
        <strain>Boxer</strain>
    </source>
</reference>
<feature type="chain" id="PRO_0000412645" description="Ubiquitin carboxyl-terminal hydrolase 37">
    <location>
        <begin position="1"/>
        <end position="981"/>
    </location>
</feature>
<feature type="domain" description="USP">
    <location>
        <begin position="343"/>
        <end position="953"/>
    </location>
</feature>
<feature type="domain" description="UIM 1" evidence="3">
    <location>
        <begin position="706"/>
        <end position="725"/>
    </location>
</feature>
<feature type="domain" description="UIM 2" evidence="3">
    <location>
        <begin position="808"/>
        <end position="827"/>
    </location>
</feature>
<feature type="domain" description="UIM 3" evidence="3">
    <location>
        <begin position="830"/>
        <end position="849"/>
    </location>
</feature>
<feature type="region of interest" description="Disordered" evidence="6">
    <location>
        <begin position="111"/>
        <end position="308"/>
    </location>
</feature>
<feature type="region of interest" description="Disordered" evidence="6">
    <location>
        <begin position="673"/>
        <end position="704"/>
    </location>
</feature>
<feature type="region of interest" description="Disordered" evidence="6">
    <location>
        <begin position="719"/>
        <end position="831"/>
    </location>
</feature>
<feature type="short sequence motif" description="KEN box 1" evidence="1">
    <location>
        <begin position="32"/>
        <end position="34"/>
    </location>
</feature>
<feature type="short sequence motif" description="D-box 1" evidence="1">
    <location>
        <begin position="71"/>
        <end position="79"/>
    </location>
</feature>
<feature type="short sequence motif" description="D-box 2" evidence="1">
    <location>
        <begin position="96"/>
        <end position="105"/>
    </location>
</feature>
<feature type="short sequence motif" description="D-box 3" evidence="1">
    <location>
        <begin position="160"/>
        <end position="168"/>
    </location>
</feature>
<feature type="short sequence motif" description="KEN box 2" evidence="1">
    <location>
        <begin position="223"/>
        <end position="225"/>
    </location>
</feature>
<feature type="short sequence motif" description="KEN box 3" evidence="1">
    <location>
        <begin position="784"/>
        <end position="786"/>
    </location>
</feature>
<feature type="compositionally biased region" description="Polar residues" evidence="6">
    <location>
        <begin position="135"/>
        <end position="148"/>
    </location>
</feature>
<feature type="compositionally biased region" description="Basic and acidic residues" evidence="6">
    <location>
        <begin position="149"/>
        <end position="159"/>
    </location>
</feature>
<feature type="compositionally biased region" description="Polar residues" evidence="6">
    <location>
        <begin position="172"/>
        <end position="195"/>
    </location>
</feature>
<feature type="compositionally biased region" description="Basic and acidic residues" evidence="6">
    <location>
        <begin position="245"/>
        <end position="259"/>
    </location>
</feature>
<feature type="compositionally biased region" description="Polar residues" evidence="6">
    <location>
        <begin position="266"/>
        <end position="300"/>
    </location>
</feature>
<feature type="compositionally biased region" description="Basic and acidic residues" evidence="6">
    <location>
        <begin position="683"/>
        <end position="697"/>
    </location>
</feature>
<feature type="compositionally biased region" description="Basic and acidic residues" evidence="6">
    <location>
        <begin position="719"/>
        <end position="734"/>
    </location>
</feature>
<feature type="compositionally biased region" description="Basic and acidic residues" evidence="6">
    <location>
        <begin position="776"/>
        <end position="788"/>
    </location>
</feature>
<feature type="compositionally biased region" description="Low complexity" evidence="6">
    <location>
        <begin position="813"/>
        <end position="824"/>
    </location>
</feature>
<feature type="active site" description="Nucleophile" evidence="2 4 5">
    <location>
        <position position="352"/>
    </location>
</feature>
<feature type="active site" description="Proton acceptor" evidence="4 5">
    <location>
        <position position="908"/>
    </location>
</feature>
<feature type="modified residue" description="Phosphoserine" evidence="2">
    <location>
        <position position="114"/>
    </location>
</feature>
<feature type="modified residue" description="Phosphoserine" evidence="2">
    <location>
        <position position="170"/>
    </location>
</feature>
<feature type="modified residue" description="Phosphoserine" evidence="2">
    <location>
        <position position="212"/>
    </location>
</feature>
<feature type="modified residue" description="Phosphoserine; by CDK2" evidence="2">
    <location>
        <position position="630"/>
    </location>
</feature>
<feature type="modified residue" description="Phosphoserine" evidence="2">
    <location>
        <position position="652"/>
    </location>
</feature>
<feature type="modified residue" description="Phosphoserine" evidence="2">
    <location>
        <position position="654"/>
    </location>
</feature>
<feature type="modified residue" description="Phosphoserine" evidence="2">
    <location>
        <position position="772"/>
    </location>
</feature>